<protein>
    <recommendedName>
        <fullName evidence="1">Lipoate-protein ligase A</fullName>
        <ecNumber evidence="1">6.3.1.20</ecNumber>
    </recommendedName>
    <alternativeName>
        <fullName evidence="1">Lipoate--protein ligase</fullName>
    </alternativeName>
</protein>
<evidence type="ECO:0000255" key="1">
    <source>
        <dbReference type="HAMAP-Rule" id="MF_01602"/>
    </source>
</evidence>
<evidence type="ECO:0000255" key="2">
    <source>
        <dbReference type="PROSITE-ProRule" id="PRU01067"/>
    </source>
</evidence>
<sequence>MSTLRLLISDSYDPWFNLAVEECIFRQMPATQRVLFLWRNADTVVIGRAQNPWKECNTRRMEEDNVRLARRSSGGGAVFHDLGNTCFTFMAGKPEYDKTISTSIVLNALNALGVSAEASGRNDLVVKTAEGDRKVSGSAYRETKDRGFHHGTLLLNADLSRLANYLNPDKKKLAAKGITSVRSRVTNLTELLPGITHEQVCEAITKAFFAHYGERVEAEIISPDKTPDLPNFAEIFARQSSWEWNFGQAPAFSHLLDERFSWGGVELHFDVEKGHITRAQVFTDSLNPAPLEALAGRLQGCLYRADMLQQECEALLVDFPDQEKELRELSTWIAGAVR</sequence>
<dbReference type="EC" id="6.3.1.20" evidence="1"/>
<dbReference type="EMBL" id="CP000036">
    <property type="protein sequence ID" value="ABB68856.1"/>
    <property type="molecule type" value="Genomic_DNA"/>
</dbReference>
<dbReference type="RefSeq" id="WP_000105858.1">
    <property type="nucleotide sequence ID" value="NC_007613.1"/>
</dbReference>
<dbReference type="SMR" id="Q31SV2"/>
<dbReference type="KEGG" id="sbo:SBO_4449"/>
<dbReference type="HOGENOM" id="CLU_022986_0_1_6"/>
<dbReference type="UniPathway" id="UPA00537">
    <property type="reaction ID" value="UER00594"/>
</dbReference>
<dbReference type="UniPathway" id="UPA00537">
    <property type="reaction ID" value="UER00595"/>
</dbReference>
<dbReference type="Proteomes" id="UP000007067">
    <property type="component" value="Chromosome"/>
</dbReference>
<dbReference type="GO" id="GO:0005829">
    <property type="term" value="C:cytosol"/>
    <property type="evidence" value="ECO:0007669"/>
    <property type="project" value="TreeGrafter"/>
</dbReference>
<dbReference type="GO" id="GO:0005524">
    <property type="term" value="F:ATP binding"/>
    <property type="evidence" value="ECO:0007669"/>
    <property type="project" value="UniProtKB-KW"/>
</dbReference>
<dbReference type="GO" id="GO:0016979">
    <property type="term" value="F:lipoate-protein ligase activity"/>
    <property type="evidence" value="ECO:0007669"/>
    <property type="project" value="UniProtKB-UniRule"/>
</dbReference>
<dbReference type="GO" id="GO:0017118">
    <property type="term" value="F:lipoyltransferase activity"/>
    <property type="evidence" value="ECO:0007669"/>
    <property type="project" value="TreeGrafter"/>
</dbReference>
<dbReference type="GO" id="GO:0036211">
    <property type="term" value="P:protein modification process"/>
    <property type="evidence" value="ECO:0007669"/>
    <property type="project" value="InterPro"/>
</dbReference>
<dbReference type="CDD" id="cd16435">
    <property type="entry name" value="BPL_LplA_LipB"/>
    <property type="match status" value="1"/>
</dbReference>
<dbReference type="FunFam" id="3.30.390.50:FF:000002">
    <property type="entry name" value="Lipoate-protein ligase A"/>
    <property type="match status" value="1"/>
</dbReference>
<dbReference type="FunFam" id="3.30.930.10:FF:000024">
    <property type="entry name" value="Lipoate-protein ligase A"/>
    <property type="match status" value="1"/>
</dbReference>
<dbReference type="Gene3D" id="3.30.930.10">
    <property type="entry name" value="Bira Bifunctional Protein, Domain 2"/>
    <property type="match status" value="1"/>
</dbReference>
<dbReference type="Gene3D" id="3.30.390.50">
    <property type="entry name" value="CO dehydrogenase flavoprotein, C-terminal domain"/>
    <property type="match status" value="1"/>
</dbReference>
<dbReference type="HAMAP" id="MF_01602">
    <property type="entry name" value="LplA"/>
    <property type="match status" value="1"/>
</dbReference>
<dbReference type="InterPro" id="IPR045864">
    <property type="entry name" value="aa-tRNA-synth_II/BPL/LPL"/>
</dbReference>
<dbReference type="InterPro" id="IPR004143">
    <property type="entry name" value="BPL_LPL_catalytic"/>
</dbReference>
<dbReference type="InterPro" id="IPR023741">
    <property type="entry name" value="Lipoate_ligase_A"/>
</dbReference>
<dbReference type="InterPro" id="IPR019491">
    <property type="entry name" value="Lipoate_protein_ligase_C"/>
</dbReference>
<dbReference type="InterPro" id="IPR004562">
    <property type="entry name" value="LipoylTrfase_LipoateP_Ligase"/>
</dbReference>
<dbReference type="NCBIfam" id="TIGR00545">
    <property type="entry name" value="lipoyltrans"/>
    <property type="match status" value="1"/>
</dbReference>
<dbReference type="PANTHER" id="PTHR12561">
    <property type="entry name" value="LIPOATE-PROTEIN LIGASE"/>
    <property type="match status" value="1"/>
</dbReference>
<dbReference type="PANTHER" id="PTHR12561:SF3">
    <property type="entry name" value="LIPOYLTRANSFERASE 1, MITOCHONDRIAL"/>
    <property type="match status" value="1"/>
</dbReference>
<dbReference type="Pfam" id="PF10437">
    <property type="entry name" value="Lip_prot_lig_C"/>
    <property type="match status" value="1"/>
</dbReference>
<dbReference type="Pfam" id="PF21948">
    <property type="entry name" value="LplA-B_cat"/>
    <property type="match status" value="1"/>
</dbReference>
<dbReference type="SUPFAM" id="SSF55681">
    <property type="entry name" value="Class II aaRS and biotin synthetases"/>
    <property type="match status" value="1"/>
</dbReference>
<dbReference type="SUPFAM" id="SSF82649">
    <property type="entry name" value="SufE/NifU"/>
    <property type="match status" value="1"/>
</dbReference>
<dbReference type="PROSITE" id="PS51733">
    <property type="entry name" value="BPL_LPL_CATALYTIC"/>
    <property type="match status" value="1"/>
</dbReference>
<organism>
    <name type="scientific">Shigella boydii serotype 4 (strain Sb227)</name>
    <dbReference type="NCBI Taxonomy" id="300268"/>
    <lineage>
        <taxon>Bacteria</taxon>
        <taxon>Pseudomonadati</taxon>
        <taxon>Pseudomonadota</taxon>
        <taxon>Gammaproteobacteria</taxon>
        <taxon>Enterobacterales</taxon>
        <taxon>Enterobacteriaceae</taxon>
        <taxon>Shigella</taxon>
    </lineage>
</organism>
<accession>Q31SV2</accession>
<feature type="chain" id="PRO_1000069388" description="Lipoate-protein ligase A">
    <location>
        <begin position="1"/>
        <end position="338"/>
    </location>
</feature>
<feature type="domain" description="BPL/LPL catalytic" evidence="2">
    <location>
        <begin position="29"/>
        <end position="216"/>
    </location>
</feature>
<feature type="binding site" evidence="1">
    <location>
        <position position="71"/>
    </location>
    <ligand>
        <name>ATP</name>
        <dbReference type="ChEBI" id="CHEBI:30616"/>
    </ligand>
</feature>
<feature type="binding site" evidence="1">
    <location>
        <begin position="76"/>
        <end position="79"/>
    </location>
    <ligand>
        <name>ATP</name>
        <dbReference type="ChEBI" id="CHEBI:30616"/>
    </ligand>
</feature>
<feature type="binding site" evidence="1">
    <location>
        <position position="134"/>
    </location>
    <ligand>
        <name>(R)-lipoate</name>
        <dbReference type="ChEBI" id="CHEBI:83088"/>
    </ligand>
</feature>
<feature type="binding site" evidence="1">
    <location>
        <position position="134"/>
    </location>
    <ligand>
        <name>ATP</name>
        <dbReference type="ChEBI" id="CHEBI:30616"/>
    </ligand>
</feature>
<reference key="1">
    <citation type="journal article" date="2005" name="Nucleic Acids Res.">
        <title>Genome dynamics and diversity of Shigella species, the etiologic agents of bacillary dysentery.</title>
        <authorList>
            <person name="Yang F."/>
            <person name="Yang J."/>
            <person name="Zhang X."/>
            <person name="Chen L."/>
            <person name="Jiang Y."/>
            <person name="Yan Y."/>
            <person name="Tang X."/>
            <person name="Wang J."/>
            <person name="Xiong Z."/>
            <person name="Dong J."/>
            <person name="Xue Y."/>
            <person name="Zhu Y."/>
            <person name="Xu X."/>
            <person name="Sun L."/>
            <person name="Chen S."/>
            <person name="Nie H."/>
            <person name="Peng J."/>
            <person name="Xu J."/>
            <person name="Wang Y."/>
            <person name="Yuan Z."/>
            <person name="Wen Y."/>
            <person name="Yao Z."/>
            <person name="Shen Y."/>
            <person name="Qiang B."/>
            <person name="Hou Y."/>
            <person name="Yu J."/>
            <person name="Jin Q."/>
        </authorList>
    </citation>
    <scope>NUCLEOTIDE SEQUENCE [LARGE SCALE GENOMIC DNA]</scope>
    <source>
        <strain>Sb227</strain>
    </source>
</reference>
<comment type="function">
    <text evidence="1">Catalyzes both the ATP-dependent activation of exogenously supplied lipoate to lipoyl-AMP and the transfer of the activated lipoyl onto the lipoyl domains of lipoate-dependent enzymes.</text>
</comment>
<comment type="catalytic activity">
    <reaction evidence="1">
        <text>L-lysyl-[lipoyl-carrier protein] + (R)-lipoate + ATP = N(6)-[(R)-lipoyl]-L-lysyl-[lipoyl-carrier protein] + AMP + diphosphate + H(+)</text>
        <dbReference type="Rhea" id="RHEA:49288"/>
        <dbReference type="Rhea" id="RHEA-COMP:10500"/>
        <dbReference type="Rhea" id="RHEA-COMP:10502"/>
        <dbReference type="ChEBI" id="CHEBI:15378"/>
        <dbReference type="ChEBI" id="CHEBI:29969"/>
        <dbReference type="ChEBI" id="CHEBI:30616"/>
        <dbReference type="ChEBI" id="CHEBI:33019"/>
        <dbReference type="ChEBI" id="CHEBI:83088"/>
        <dbReference type="ChEBI" id="CHEBI:83099"/>
        <dbReference type="ChEBI" id="CHEBI:456215"/>
        <dbReference type="EC" id="6.3.1.20"/>
    </reaction>
</comment>
<comment type="pathway">
    <text evidence="1">Protein modification; protein lipoylation via exogenous pathway; protein N(6)-(lipoyl)lysine from lipoate: step 1/2.</text>
</comment>
<comment type="pathway">
    <text evidence="1">Protein modification; protein lipoylation via exogenous pathway; protein N(6)-(lipoyl)lysine from lipoate: step 2/2.</text>
</comment>
<comment type="subunit">
    <text evidence="1">Monomer.</text>
</comment>
<comment type="subcellular location">
    <subcellularLocation>
        <location evidence="1">Cytoplasm</location>
    </subcellularLocation>
</comment>
<comment type="miscellaneous">
    <text evidence="1">In the transfer reaction, the free carboxyl group of lipoic acid is attached via an amide linkage to the epsilon-amino group of a specific lysine residue of lipoyl domains of lipoate-dependent enzymes.</text>
</comment>
<comment type="similarity">
    <text evidence="1">Belongs to the LplA family.</text>
</comment>
<gene>
    <name evidence="1" type="primary">lplA</name>
    <name type="ordered locus">SBO_4449</name>
</gene>
<keyword id="KW-0067">ATP-binding</keyword>
<keyword id="KW-0963">Cytoplasm</keyword>
<keyword id="KW-0436">Ligase</keyword>
<keyword id="KW-0547">Nucleotide-binding</keyword>
<proteinExistence type="inferred from homology"/>
<name>LPLA_SHIBS</name>